<keyword id="KW-0378">Hydrolase</keyword>
<keyword id="KW-1185">Reference proteome</keyword>
<comment type="function">
    <text evidence="1">Putative deacetylase.</text>
</comment>
<comment type="similarity">
    <text evidence="2">Belongs to the histone deacetylase family.</text>
</comment>
<evidence type="ECO:0000250" key="1"/>
<evidence type="ECO:0000305" key="2"/>
<reference key="1">
    <citation type="journal article" date="1996" name="Science">
        <title>Complete genome sequence of the methanogenic archaeon, Methanococcus jannaschii.</title>
        <authorList>
            <person name="Bult C.J."/>
            <person name="White O."/>
            <person name="Olsen G.J."/>
            <person name="Zhou L."/>
            <person name="Fleischmann R.D."/>
            <person name="Sutton G.G."/>
            <person name="Blake J.A."/>
            <person name="FitzGerald L.M."/>
            <person name="Clayton R.A."/>
            <person name="Gocayne J.D."/>
            <person name="Kerlavage A.R."/>
            <person name="Dougherty B.A."/>
            <person name="Tomb J.-F."/>
            <person name="Adams M.D."/>
            <person name="Reich C.I."/>
            <person name="Overbeek R."/>
            <person name="Kirkness E.F."/>
            <person name="Weinstock K.G."/>
            <person name="Merrick J.M."/>
            <person name="Glodek A."/>
            <person name="Scott J.L."/>
            <person name="Geoghagen N.S.M."/>
            <person name="Weidman J.F."/>
            <person name="Fuhrmann J.L."/>
            <person name="Nguyen D."/>
            <person name="Utterback T.R."/>
            <person name="Kelley J.M."/>
            <person name="Peterson J.D."/>
            <person name="Sadow P.W."/>
            <person name="Hanna M.C."/>
            <person name="Cotton M.D."/>
            <person name="Roberts K.M."/>
            <person name="Hurst M.A."/>
            <person name="Kaine B.P."/>
            <person name="Borodovsky M."/>
            <person name="Klenk H.-P."/>
            <person name="Fraser C.M."/>
            <person name="Smith H.O."/>
            <person name="Woese C.R."/>
            <person name="Venter J.C."/>
        </authorList>
    </citation>
    <scope>NUCLEOTIDE SEQUENCE [LARGE SCALE GENOMIC DNA]</scope>
    <source>
        <strain>ATCC 43067 / DSM 2661 / JAL-1 / JCM 10045 / NBRC 100440</strain>
    </source>
</reference>
<dbReference type="EMBL" id="L77117">
    <property type="protein sequence ID" value="AAB98526.1"/>
    <property type="molecule type" value="Genomic_DNA"/>
</dbReference>
<dbReference type="PIR" id="G64366">
    <property type="entry name" value="G64366"/>
</dbReference>
<dbReference type="SMR" id="Q57955"/>
<dbReference type="FunCoup" id="Q57955">
    <property type="interactions" value="100"/>
</dbReference>
<dbReference type="STRING" id="243232.MJ_0535"/>
<dbReference type="PaxDb" id="243232-MJ_0535"/>
<dbReference type="EnsemblBacteria" id="AAB98526">
    <property type="protein sequence ID" value="AAB98526"/>
    <property type="gene ID" value="MJ_0535"/>
</dbReference>
<dbReference type="KEGG" id="mja:MJ_0535"/>
<dbReference type="eggNOG" id="arCOG00324">
    <property type="taxonomic scope" value="Archaea"/>
</dbReference>
<dbReference type="HOGENOM" id="CLU_007727_8_2_2"/>
<dbReference type="InParanoid" id="Q57955"/>
<dbReference type="OrthoDB" id="147549at2157"/>
<dbReference type="PhylomeDB" id="Q57955"/>
<dbReference type="Proteomes" id="UP000000805">
    <property type="component" value="Chromosome"/>
</dbReference>
<dbReference type="GO" id="GO:0004407">
    <property type="term" value="F:histone deacetylase activity"/>
    <property type="evidence" value="ECO:0000318"/>
    <property type="project" value="GO_Central"/>
</dbReference>
<dbReference type="GO" id="GO:0016787">
    <property type="term" value="F:hydrolase activity"/>
    <property type="evidence" value="ECO:0007669"/>
    <property type="project" value="UniProtKB-KW"/>
</dbReference>
<dbReference type="GO" id="GO:0040029">
    <property type="term" value="P:epigenetic regulation of gene expression"/>
    <property type="evidence" value="ECO:0000318"/>
    <property type="project" value="GO_Central"/>
</dbReference>
<dbReference type="CDD" id="cd10001">
    <property type="entry name" value="HDAC_classII_APAH"/>
    <property type="match status" value="1"/>
</dbReference>
<dbReference type="Gene3D" id="3.40.800.20">
    <property type="entry name" value="Histone deacetylase domain"/>
    <property type="match status" value="1"/>
</dbReference>
<dbReference type="InterPro" id="IPR050284">
    <property type="entry name" value="HDAC_PDAC"/>
</dbReference>
<dbReference type="InterPro" id="IPR000286">
    <property type="entry name" value="His_deacetylse"/>
</dbReference>
<dbReference type="InterPro" id="IPR023801">
    <property type="entry name" value="His_deacetylse_dom"/>
</dbReference>
<dbReference type="InterPro" id="IPR037138">
    <property type="entry name" value="His_deacetylse_dom_sf"/>
</dbReference>
<dbReference type="InterPro" id="IPR023696">
    <property type="entry name" value="Ureohydrolase_dom_sf"/>
</dbReference>
<dbReference type="PANTHER" id="PTHR10625:SF10">
    <property type="entry name" value="HISTONE DEACETYLASE HDAC1"/>
    <property type="match status" value="1"/>
</dbReference>
<dbReference type="PANTHER" id="PTHR10625">
    <property type="entry name" value="HISTONE DEACETYLASE HDAC1-RELATED"/>
    <property type="match status" value="1"/>
</dbReference>
<dbReference type="Pfam" id="PF00850">
    <property type="entry name" value="Hist_deacetyl"/>
    <property type="match status" value="1"/>
</dbReference>
<dbReference type="PRINTS" id="PR01270">
    <property type="entry name" value="HDASUPER"/>
</dbReference>
<dbReference type="SUPFAM" id="SSF52768">
    <property type="entry name" value="Arginase/deacetylase"/>
    <property type="match status" value="1"/>
</dbReference>
<gene>
    <name type="ordered locus">MJ0535</name>
</gene>
<sequence length="343" mass="38174">MVSIMPKILYNPEVLGHKPKSYHVENPERVLTILNSLKSNGFDDIVLIEGKSTINEILEIHSRDYVYSIINLSKSFNYYDGDTYLCDRTLDAALTAFKLAKEAVKLALKDRDLYFALTRPPGHHAGISGRALGAMSNGFCIFNNIAGAARLAKNYMKKVIIIDFDVHHGNGTQEIFWNDNRVIHIDFHQRGIYPGTGDILDIGGEEAKGTKINLPFPAHSTDADYIFAWNEIVEPILNYFSPDTVLVSAGFDAFINDGLASMDLTETFYRFVGAKLSGYSVTAVLEGGYSIGLKYAPPAFLDGYVDAKDVLDNLEDYTVINSNEVKSMVKNVKKIIGEYLDIF</sequence>
<protein>
    <recommendedName>
        <fullName>Uncharacterized protein MJ0535</fullName>
    </recommendedName>
</protein>
<feature type="chain" id="PRO_0000114745" description="Uncharacterized protein MJ0535">
    <location>
        <begin position="1"/>
        <end position="343"/>
    </location>
</feature>
<name>Y535_METJA</name>
<proteinExistence type="inferred from homology"/>
<organism>
    <name type="scientific">Methanocaldococcus jannaschii (strain ATCC 43067 / DSM 2661 / JAL-1 / JCM 10045 / NBRC 100440)</name>
    <name type="common">Methanococcus jannaschii</name>
    <dbReference type="NCBI Taxonomy" id="243232"/>
    <lineage>
        <taxon>Archaea</taxon>
        <taxon>Methanobacteriati</taxon>
        <taxon>Methanobacteriota</taxon>
        <taxon>Methanomada group</taxon>
        <taxon>Methanococci</taxon>
        <taxon>Methanococcales</taxon>
        <taxon>Methanocaldococcaceae</taxon>
        <taxon>Methanocaldococcus</taxon>
    </lineage>
</organism>
<accession>Q57955</accession>